<keyword id="KW-0067">ATP-binding</keyword>
<keyword id="KW-0418">Kinase</keyword>
<keyword id="KW-0547">Nucleotide-binding</keyword>
<keyword id="KW-0597">Phosphoprotein</keyword>
<keyword id="KW-1185">Reference proteome</keyword>
<keyword id="KW-0723">Serine/threonine-protein kinase</keyword>
<keyword id="KW-0808">Transferase</keyword>
<dbReference type="EC" id="2.7.11.16"/>
<dbReference type="EMBL" id="HE601451">
    <property type="protein sequence ID" value="CAP23139.3"/>
    <property type="molecule type" value="Genomic_DNA"/>
</dbReference>
<dbReference type="SMR" id="Q622Z7"/>
<dbReference type="FunCoup" id="Q622Z7">
    <property type="interactions" value="1905"/>
</dbReference>
<dbReference type="STRING" id="6238.Q622Z7"/>
<dbReference type="KEGG" id="cbr:CBG_01947"/>
<dbReference type="CTD" id="8585743"/>
<dbReference type="WormBase" id="CBG01947a">
    <property type="protein sequence ID" value="CBP30829"/>
    <property type="gene ID" value="WBGene00025109"/>
    <property type="gene designation" value="Cbr-grk-1"/>
</dbReference>
<dbReference type="eggNOG" id="KOG0986">
    <property type="taxonomic scope" value="Eukaryota"/>
</dbReference>
<dbReference type="HOGENOM" id="CLU_000288_63_41_1"/>
<dbReference type="InParanoid" id="Q622Z7"/>
<dbReference type="OMA" id="VECLDSH"/>
<dbReference type="Proteomes" id="UP000008549">
    <property type="component" value="Unassembled WGS sequence"/>
</dbReference>
<dbReference type="GO" id="GO:0005737">
    <property type="term" value="C:cytoplasm"/>
    <property type="evidence" value="ECO:0000318"/>
    <property type="project" value="GO_Central"/>
</dbReference>
<dbReference type="GO" id="GO:0005524">
    <property type="term" value="F:ATP binding"/>
    <property type="evidence" value="ECO:0007669"/>
    <property type="project" value="UniProtKB-KW"/>
</dbReference>
<dbReference type="GO" id="GO:0004703">
    <property type="term" value="F:G protein-coupled receptor kinase activity"/>
    <property type="evidence" value="ECO:0007669"/>
    <property type="project" value="UniProtKB-EC"/>
</dbReference>
<dbReference type="GO" id="GO:0004672">
    <property type="term" value="F:protein kinase activity"/>
    <property type="evidence" value="ECO:0000318"/>
    <property type="project" value="GO_Central"/>
</dbReference>
<dbReference type="GO" id="GO:0009966">
    <property type="term" value="P:regulation of signal transduction"/>
    <property type="evidence" value="ECO:0000318"/>
    <property type="project" value="GO_Central"/>
</dbReference>
<dbReference type="GO" id="GO:0007165">
    <property type="term" value="P:signal transduction"/>
    <property type="evidence" value="ECO:0007669"/>
    <property type="project" value="InterPro"/>
</dbReference>
<dbReference type="FunFam" id="1.10.167.10:FF:000009">
    <property type="entry name" value="G protein-coupled receptor kinase"/>
    <property type="match status" value="1"/>
</dbReference>
<dbReference type="FunFam" id="1.10.510.10:FF:000074">
    <property type="entry name" value="G protein-coupled receptor kinase"/>
    <property type="match status" value="1"/>
</dbReference>
<dbReference type="Gene3D" id="3.30.200.20">
    <property type="entry name" value="Phosphorylase Kinase, domain 1"/>
    <property type="match status" value="1"/>
</dbReference>
<dbReference type="Gene3D" id="1.10.167.10">
    <property type="entry name" value="Regulator of G-protein Signalling 4, domain 2"/>
    <property type="match status" value="1"/>
</dbReference>
<dbReference type="Gene3D" id="1.10.510.10">
    <property type="entry name" value="Transferase(Phosphotransferase) domain 1"/>
    <property type="match status" value="1"/>
</dbReference>
<dbReference type="InterPro" id="IPR000961">
    <property type="entry name" value="AGC-kinase_C"/>
</dbReference>
<dbReference type="InterPro" id="IPR000239">
    <property type="entry name" value="GPCR_kinase"/>
</dbReference>
<dbReference type="InterPro" id="IPR011009">
    <property type="entry name" value="Kinase-like_dom_sf"/>
</dbReference>
<dbReference type="InterPro" id="IPR000719">
    <property type="entry name" value="Prot_kinase_dom"/>
</dbReference>
<dbReference type="InterPro" id="IPR017441">
    <property type="entry name" value="Protein_kinase_ATP_BS"/>
</dbReference>
<dbReference type="InterPro" id="IPR016137">
    <property type="entry name" value="RGS"/>
</dbReference>
<dbReference type="InterPro" id="IPR036305">
    <property type="entry name" value="RGS_sf"/>
</dbReference>
<dbReference type="InterPro" id="IPR044926">
    <property type="entry name" value="RGS_subdomain_2"/>
</dbReference>
<dbReference type="InterPro" id="IPR008271">
    <property type="entry name" value="Ser/Thr_kinase_AS"/>
</dbReference>
<dbReference type="PANTHER" id="PTHR24355:SF28">
    <property type="entry name" value="G PROTEIN-COUPLED RECEPTOR KINASE 2"/>
    <property type="match status" value="1"/>
</dbReference>
<dbReference type="PANTHER" id="PTHR24355">
    <property type="entry name" value="G PROTEIN-COUPLED RECEPTOR KINASE/RIBOSOMAL PROTEIN S6 KINASE"/>
    <property type="match status" value="1"/>
</dbReference>
<dbReference type="Pfam" id="PF00069">
    <property type="entry name" value="Pkinase"/>
    <property type="match status" value="1"/>
</dbReference>
<dbReference type="Pfam" id="PF00615">
    <property type="entry name" value="RGS"/>
    <property type="match status" value="1"/>
</dbReference>
<dbReference type="PRINTS" id="PR00717">
    <property type="entry name" value="GPCRKINASE"/>
</dbReference>
<dbReference type="SMART" id="SM00315">
    <property type="entry name" value="RGS"/>
    <property type="match status" value="1"/>
</dbReference>
<dbReference type="SMART" id="SM00133">
    <property type="entry name" value="S_TK_X"/>
    <property type="match status" value="1"/>
</dbReference>
<dbReference type="SMART" id="SM00220">
    <property type="entry name" value="S_TKc"/>
    <property type="match status" value="1"/>
</dbReference>
<dbReference type="SUPFAM" id="SSF56112">
    <property type="entry name" value="Protein kinase-like (PK-like)"/>
    <property type="match status" value="1"/>
</dbReference>
<dbReference type="SUPFAM" id="SSF48097">
    <property type="entry name" value="Regulator of G-protein signaling, RGS"/>
    <property type="match status" value="1"/>
</dbReference>
<dbReference type="PROSITE" id="PS51285">
    <property type="entry name" value="AGC_KINASE_CTER"/>
    <property type="match status" value="1"/>
</dbReference>
<dbReference type="PROSITE" id="PS00107">
    <property type="entry name" value="PROTEIN_KINASE_ATP"/>
    <property type="match status" value="1"/>
</dbReference>
<dbReference type="PROSITE" id="PS50011">
    <property type="entry name" value="PROTEIN_KINASE_DOM"/>
    <property type="match status" value="1"/>
</dbReference>
<dbReference type="PROSITE" id="PS00108">
    <property type="entry name" value="PROTEIN_KINASE_ST"/>
    <property type="match status" value="1"/>
</dbReference>
<dbReference type="PROSITE" id="PS50132">
    <property type="entry name" value="RGS"/>
    <property type="match status" value="1"/>
</dbReference>
<organism>
    <name type="scientific">Caenorhabditis briggsae</name>
    <dbReference type="NCBI Taxonomy" id="6238"/>
    <lineage>
        <taxon>Eukaryota</taxon>
        <taxon>Metazoa</taxon>
        <taxon>Ecdysozoa</taxon>
        <taxon>Nematoda</taxon>
        <taxon>Chromadorea</taxon>
        <taxon>Rhabditida</taxon>
        <taxon>Rhabditina</taxon>
        <taxon>Rhabditomorpha</taxon>
        <taxon>Rhabditoidea</taxon>
        <taxon>Rhabditidae</taxon>
        <taxon>Peloderinae</taxon>
        <taxon>Caenorhabditis</taxon>
    </lineage>
</organism>
<proteinExistence type="inferred from homology"/>
<sequence>MEIENIVANTVYIKARESGGQKKGKSKKWKNYLQFPHYTECIPQKKENGEPYAFVVEKQPIGKLLFHEFCQATNPQYHQCCQFQTKVEEYETSDDDGQSRRDLASAIVALLSSKNDQDLSSSIDEEVWCAFLSDEVISTCISTADSATHDSEPRSDIFSEPYRLTREYLKQKPFAEFIQTMYFHRFLQWKWLEKRPVDKHTFRLYRVLGKGGFGEVCACQVRASGKMYALKKLEKKRVKKRHAETLSLNEKQILQKVNSPFVVSLAYAYETKDALCLVLTLMNGGDLKFHLYNLMPGGFDEKRVQFYAAEITLGLQHLHLEHILYRDLKPENILLDDFGHVRISDLGLAVELKDNEPIKGRVGTVGYMAPEIVKNERYTYGVDWWGVGCLIYEMIEGKAPFRQRKEKVKREEVERRVREDQEKYSEKFSEAARTLCRGLLHKEPGFRLGCRRVGKPEDGAEEIRAHPFFNTADTATGREPVPWKKMEAGKVTPPFCPDPRAVYAKDVLDIEQFSTVKGVRLDATDTQFYGKFNTGCVSIPWQSEMIETECFAELNTFYEEDGSLVWNLRPDGINMEERRNGTSKPGFFSRLFRKKNIEVTKSLHDLSRLGVDQQQPSTSAKPAAVRSSRAASASGRTSMI</sequence>
<name>GRK1_CAEBR</name>
<comment type="function">
    <text evidence="1">Specifically phosphorylates the activated forms of G protein-coupled receptors.</text>
</comment>
<comment type="catalytic activity">
    <reaction>
        <text>[G-protein-coupled receptor] + ATP = [G-protein-coupled receptor]-phosphate + ADP + H(+)</text>
        <dbReference type="Rhea" id="RHEA:12008"/>
        <dbReference type="Rhea" id="RHEA-COMP:11260"/>
        <dbReference type="Rhea" id="RHEA-COMP:11261"/>
        <dbReference type="ChEBI" id="CHEBI:15378"/>
        <dbReference type="ChEBI" id="CHEBI:30616"/>
        <dbReference type="ChEBI" id="CHEBI:43176"/>
        <dbReference type="ChEBI" id="CHEBI:68546"/>
        <dbReference type="ChEBI" id="CHEBI:456216"/>
        <dbReference type="EC" id="2.7.11.16"/>
    </reaction>
</comment>
<comment type="similarity">
    <text evidence="7">Belongs to the protein kinase superfamily. AGC Ser/Thr protein kinase family. GPRK subfamily.</text>
</comment>
<feature type="chain" id="PRO_0000226318" description="G protein-coupled receptor kinase 1">
    <location>
        <begin position="1"/>
        <end position="640"/>
    </location>
</feature>
<feature type="domain" description="RGS" evidence="3">
    <location>
        <begin position="52"/>
        <end position="187"/>
    </location>
</feature>
<feature type="domain" description="Protein kinase" evidence="2">
    <location>
        <begin position="202"/>
        <end position="469"/>
    </location>
</feature>
<feature type="domain" description="AGC-kinase C-terminal" evidence="4">
    <location>
        <begin position="479"/>
        <end position="544"/>
    </location>
</feature>
<feature type="region of interest" description="N-terminal" evidence="1">
    <location>
        <begin position="1"/>
        <end position="201"/>
    </location>
</feature>
<feature type="region of interest" description="Disordered" evidence="6">
    <location>
        <begin position="610"/>
        <end position="640"/>
    </location>
</feature>
<feature type="compositionally biased region" description="Low complexity" evidence="6">
    <location>
        <begin position="619"/>
        <end position="640"/>
    </location>
</feature>
<feature type="active site" description="Proton acceptor" evidence="2 5">
    <location>
        <position position="327"/>
    </location>
</feature>
<feature type="binding site" evidence="2">
    <location>
        <begin position="208"/>
        <end position="216"/>
    </location>
    <ligand>
        <name>ATP</name>
        <dbReference type="ChEBI" id="CHEBI:30616"/>
    </ligand>
</feature>
<feature type="binding site" evidence="2">
    <location>
        <position position="231"/>
    </location>
    <ligand>
        <name>ATP</name>
        <dbReference type="ChEBI" id="CHEBI:30616"/>
    </ligand>
</feature>
<protein>
    <recommendedName>
        <fullName>G protein-coupled receptor kinase 1</fullName>
        <ecNumber>2.7.11.16</ecNumber>
    </recommendedName>
</protein>
<gene>
    <name type="primary">grk-1</name>
    <name type="ORF">CBG01947</name>
</gene>
<accession>Q622Z7</accession>
<accession>A8WRN1</accession>
<reference key="1">
    <citation type="journal article" date="2003" name="PLoS Biol.">
        <title>The genome sequence of Caenorhabditis briggsae: a platform for comparative genomics.</title>
        <authorList>
            <person name="Stein L.D."/>
            <person name="Bao Z."/>
            <person name="Blasiar D."/>
            <person name="Blumenthal T."/>
            <person name="Brent M.R."/>
            <person name="Chen N."/>
            <person name="Chinwalla A."/>
            <person name="Clarke L."/>
            <person name="Clee C."/>
            <person name="Coghlan A."/>
            <person name="Coulson A."/>
            <person name="D'Eustachio P."/>
            <person name="Fitch D.H.A."/>
            <person name="Fulton L.A."/>
            <person name="Fulton R.E."/>
            <person name="Griffiths-Jones S."/>
            <person name="Harris T.W."/>
            <person name="Hillier L.W."/>
            <person name="Kamath R."/>
            <person name="Kuwabara P.E."/>
            <person name="Mardis E.R."/>
            <person name="Marra M.A."/>
            <person name="Miner T.L."/>
            <person name="Minx P."/>
            <person name="Mullikin J.C."/>
            <person name="Plumb R.W."/>
            <person name="Rogers J."/>
            <person name="Schein J.E."/>
            <person name="Sohrmann M."/>
            <person name="Spieth J."/>
            <person name="Stajich J.E."/>
            <person name="Wei C."/>
            <person name="Willey D."/>
            <person name="Wilson R.K."/>
            <person name="Durbin R.M."/>
            <person name="Waterston R.H."/>
        </authorList>
    </citation>
    <scope>NUCLEOTIDE SEQUENCE [LARGE SCALE GENOMIC DNA]</scope>
    <source>
        <strain>AF16</strain>
    </source>
</reference>
<evidence type="ECO:0000250" key="1"/>
<evidence type="ECO:0000255" key="2">
    <source>
        <dbReference type="PROSITE-ProRule" id="PRU00159"/>
    </source>
</evidence>
<evidence type="ECO:0000255" key="3">
    <source>
        <dbReference type="PROSITE-ProRule" id="PRU00171"/>
    </source>
</evidence>
<evidence type="ECO:0000255" key="4">
    <source>
        <dbReference type="PROSITE-ProRule" id="PRU00618"/>
    </source>
</evidence>
<evidence type="ECO:0000255" key="5">
    <source>
        <dbReference type="PROSITE-ProRule" id="PRU10027"/>
    </source>
</evidence>
<evidence type="ECO:0000256" key="6">
    <source>
        <dbReference type="SAM" id="MobiDB-lite"/>
    </source>
</evidence>
<evidence type="ECO:0000305" key="7"/>